<protein>
    <recommendedName>
        <fullName evidence="1">Membrane protein insertase YidC</fullName>
    </recommendedName>
    <alternativeName>
        <fullName evidence="1">Foldase YidC</fullName>
    </alternativeName>
    <alternativeName>
        <fullName evidence="1">Membrane integrase YidC</fullName>
    </alternativeName>
    <alternativeName>
        <fullName evidence="1">Membrane protein YidC</fullName>
    </alternativeName>
</protein>
<evidence type="ECO:0000255" key="1">
    <source>
        <dbReference type="HAMAP-Rule" id="MF_01810"/>
    </source>
</evidence>
<evidence type="ECO:0000256" key="2">
    <source>
        <dbReference type="SAM" id="MobiDB-lite"/>
    </source>
</evidence>
<comment type="function">
    <text evidence="1">Required for the insertion and/or proper folding and/or complex formation of integral membrane proteins into the membrane. Involved in integration of membrane proteins that insert both dependently and independently of the Sec translocase complex, as well as at least some lipoproteins. Aids folding of multispanning membrane proteins.</text>
</comment>
<comment type="subunit">
    <text evidence="1">Interacts with the Sec translocase complex via SecD. Specifically interacts with transmembrane segments of nascent integral membrane proteins during membrane integration.</text>
</comment>
<comment type="subcellular location">
    <subcellularLocation>
        <location evidence="1">Cell inner membrane</location>
        <topology evidence="1">Multi-pass membrane protein</topology>
    </subcellularLocation>
</comment>
<comment type="similarity">
    <text evidence="1">Belongs to the OXA1/ALB3/YidC family. Type 1 subfamily.</text>
</comment>
<proteinExistence type="inferred from homology"/>
<feature type="chain" id="PRO_1000187680" description="Membrane protein insertase YidC">
    <location>
        <begin position="1"/>
        <end position="617"/>
    </location>
</feature>
<feature type="transmembrane region" description="Helical" evidence="1">
    <location>
        <begin position="8"/>
        <end position="28"/>
    </location>
</feature>
<feature type="transmembrane region" description="Helical" evidence="1">
    <location>
        <begin position="387"/>
        <end position="407"/>
    </location>
</feature>
<feature type="transmembrane region" description="Helical" evidence="1">
    <location>
        <begin position="461"/>
        <end position="481"/>
    </location>
</feature>
<feature type="transmembrane region" description="Helical" evidence="1">
    <location>
        <begin position="517"/>
        <end position="533"/>
    </location>
</feature>
<feature type="transmembrane region" description="Helical" evidence="1">
    <location>
        <begin position="549"/>
        <end position="569"/>
    </location>
</feature>
<feature type="region of interest" description="Disordered" evidence="2">
    <location>
        <begin position="36"/>
        <end position="91"/>
    </location>
</feature>
<feature type="compositionally biased region" description="Polar residues" evidence="2">
    <location>
        <begin position="36"/>
        <end position="49"/>
    </location>
</feature>
<feature type="compositionally biased region" description="Low complexity" evidence="2">
    <location>
        <begin position="61"/>
        <end position="81"/>
    </location>
</feature>
<dbReference type="EMBL" id="CP001001">
    <property type="protein sequence ID" value="ACB25480.1"/>
    <property type="molecule type" value="Genomic_DNA"/>
</dbReference>
<dbReference type="RefSeq" id="WP_012320442.1">
    <property type="nucleotide sequence ID" value="NC_010505.1"/>
</dbReference>
<dbReference type="SMR" id="B1LTW1"/>
<dbReference type="STRING" id="426355.Mrad2831_3503"/>
<dbReference type="GeneID" id="6139556"/>
<dbReference type="KEGG" id="mrd:Mrad2831_3503"/>
<dbReference type="eggNOG" id="COG0706">
    <property type="taxonomic scope" value="Bacteria"/>
</dbReference>
<dbReference type="HOGENOM" id="CLU_016535_1_0_5"/>
<dbReference type="OrthoDB" id="9780552at2"/>
<dbReference type="Proteomes" id="UP000006589">
    <property type="component" value="Chromosome"/>
</dbReference>
<dbReference type="GO" id="GO:0005886">
    <property type="term" value="C:plasma membrane"/>
    <property type="evidence" value="ECO:0007669"/>
    <property type="project" value="UniProtKB-SubCell"/>
</dbReference>
<dbReference type="GO" id="GO:0032977">
    <property type="term" value="F:membrane insertase activity"/>
    <property type="evidence" value="ECO:0007669"/>
    <property type="project" value="InterPro"/>
</dbReference>
<dbReference type="GO" id="GO:0051205">
    <property type="term" value="P:protein insertion into membrane"/>
    <property type="evidence" value="ECO:0007669"/>
    <property type="project" value="TreeGrafter"/>
</dbReference>
<dbReference type="GO" id="GO:0015031">
    <property type="term" value="P:protein transport"/>
    <property type="evidence" value="ECO:0007669"/>
    <property type="project" value="UniProtKB-KW"/>
</dbReference>
<dbReference type="CDD" id="cd20070">
    <property type="entry name" value="5TM_YidC_Alb3"/>
    <property type="match status" value="1"/>
</dbReference>
<dbReference type="CDD" id="cd19961">
    <property type="entry name" value="EcYidC-like_peri"/>
    <property type="match status" value="1"/>
</dbReference>
<dbReference type="Gene3D" id="2.70.98.90">
    <property type="match status" value="1"/>
</dbReference>
<dbReference type="HAMAP" id="MF_01810">
    <property type="entry name" value="YidC_type1"/>
    <property type="match status" value="1"/>
</dbReference>
<dbReference type="InterPro" id="IPR019998">
    <property type="entry name" value="Membr_insert_YidC"/>
</dbReference>
<dbReference type="InterPro" id="IPR028053">
    <property type="entry name" value="Membr_insert_YidC_N"/>
</dbReference>
<dbReference type="InterPro" id="IPR001708">
    <property type="entry name" value="YidC/ALB3/OXA1/COX18"/>
</dbReference>
<dbReference type="InterPro" id="IPR028055">
    <property type="entry name" value="YidC/Oxa/ALB_C"/>
</dbReference>
<dbReference type="InterPro" id="IPR047196">
    <property type="entry name" value="YidC_ALB_C"/>
</dbReference>
<dbReference type="InterPro" id="IPR038221">
    <property type="entry name" value="YidC_periplasmic_sf"/>
</dbReference>
<dbReference type="NCBIfam" id="NF002353">
    <property type="entry name" value="PRK01318.1-4"/>
    <property type="match status" value="1"/>
</dbReference>
<dbReference type="NCBIfam" id="TIGR03593">
    <property type="entry name" value="yidC_nterm"/>
    <property type="match status" value="1"/>
</dbReference>
<dbReference type="NCBIfam" id="TIGR03592">
    <property type="entry name" value="yidC_oxa1_cterm"/>
    <property type="match status" value="1"/>
</dbReference>
<dbReference type="PANTHER" id="PTHR12428:SF65">
    <property type="entry name" value="CYTOCHROME C OXIDASE ASSEMBLY PROTEIN COX18, MITOCHONDRIAL"/>
    <property type="match status" value="1"/>
</dbReference>
<dbReference type="PANTHER" id="PTHR12428">
    <property type="entry name" value="OXA1"/>
    <property type="match status" value="1"/>
</dbReference>
<dbReference type="Pfam" id="PF02096">
    <property type="entry name" value="60KD_IMP"/>
    <property type="match status" value="1"/>
</dbReference>
<dbReference type="Pfam" id="PF14849">
    <property type="entry name" value="YidC_periplas"/>
    <property type="match status" value="1"/>
</dbReference>
<dbReference type="PRINTS" id="PR00701">
    <property type="entry name" value="60KDINNERMP"/>
</dbReference>
<dbReference type="PRINTS" id="PR01900">
    <property type="entry name" value="YIDCPROTEIN"/>
</dbReference>
<sequence>MGNDKTNMFVAIGLSLLVLLGWQYFVAGPRMEQQRQIEAQNKAAQQQPPGVTPDGVPSPSPKEGGPAAPAPGTLPTAQGGPVSREAALARSPRVRIETPALSGSIALKGGRVDDVSLKNYHETIDPKSPEIVLFSPAGTETPYYAEFGWVGANAGPLPTNDTLWTSDGKTLSPGMPVTLTWDNGAGLVFKRIIAVDDKYMFTIRDEVENKGSGAITLYPYSLVSRWGKPHTQGYYVLHEGMIGYLGNDGLQEFTYDKLAKEGAYGGANTKGKAWTGVTGGFVGITDKYWAAAAIPDQDTPYTGAFTDRTDGATNVYQASVRGDAVNLAAGASATATQRLFAGAKEVNVINNYEKDLGIKHFDLMIDWGWFFFITKPMFRALDFFYHLFGNFGVSILVVTFCLKLLFLPIANRSYVSMAKMKAVQPEMAAIRERYKDDRMKQQQATMELYKKEKINPVAGCWPVLIQIPVFFALYKVLFITIEMRHAPFFGWIRDLAAPDPTSIVNLFGLLPFPAPDFVHLGVWPIIMGITMFVQMKMNPAPPDPVQAQIFTFMPIVFTFMLGSFPAGLVIYWAWNNTLSVIQQYVIMRRNGVKVELWDNLRSTFRRGNGTKAAATKS</sequence>
<accession>B1LTW1</accession>
<reference key="1">
    <citation type="submission" date="2008-03" db="EMBL/GenBank/DDBJ databases">
        <title>Complete sequence of chromosome of Methylobacterium radiotolerans JCM 2831.</title>
        <authorList>
            <consortium name="US DOE Joint Genome Institute"/>
            <person name="Copeland A."/>
            <person name="Lucas S."/>
            <person name="Lapidus A."/>
            <person name="Glavina del Rio T."/>
            <person name="Dalin E."/>
            <person name="Tice H."/>
            <person name="Bruce D."/>
            <person name="Goodwin L."/>
            <person name="Pitluck S."/>
            <person name="Kiss H."/>
            <person name="Brettin T."/>
            <person name="Detter J.C."/>
            <person name="Han C."/>
            <person name="Kuske C.R."/>
            <person name="Schmutz J."/>
            <person name="Larimer F."/>
            <person name="Land M."/>
            <person name="Hauser L."/>
            <person name="Kyrpides N."/>
            <person name="Mikhailova N."/>
            <person name="Marx C.J."/>
            <person name="Richardson P."/>
        </authorList>
    </citation>
    <scope>NUCLEOTIDE SEQUENCE [LARGE SCALE GENOMIC DNA]</scope>
    <source>
        <strain>ATCC 27329 / DSM 1819 / JCM 2831 / NBRC 15690 / NCIMB 10815 / 0-1</strain>
    </source>
</reference>
<keyword id="KW-0997">Cell inner membrane</keyword>
<keyword id="KW-1003">Cell membrane</keyword>
<keyword id="KW-0143">Chaperone</keyword>
<keyword id="KW-0472">Membrane</keyword>
<keyword id="KW-0653">Protein transport</keyword>
<keyword id="KW-0812">Transmembrane</keyword>
<keyword id="KW-1133">Transmembrane helix</keyword>
<keyword id="KW-0813">Transport</keyword>
<gene>
    <name evidence="1" type="primary">yidC</name>
    <name type="ordered locus">Mrad2831_3503</name>
</gene>
<name>YIDC_METRJ</name>
<organism>
    <name type="scientific">Methylobacterium radiotolerans (strain ATCC 27329 / DSM 1819 / JCM 2831 / NBRC 15690 / NCIMB 10815 / 0-1)</name>
    <dbReference type="NCBI Taxonomy" id="426355"/>
    <lineage>
        <taxon>Bacteria</taxon>
        <taxon>Pseudomonadati</taxon>
        <taxon>Pseudomonadota</taxon>
        <taxon>Alphaproteobacteria</taxon>
        <taxon>Hyphomicrobiales</taxon>
        <taxon>Methylobacteriaceae</taxon>
        <taxon>Methylobacterium</taxon>
    </lineage>
</organism>